<protein>
    <recommendedName>
        <fullName evidence="3">Centromere protein V-like protein 2</fullName>
    </recommendedName>
    <alternativeName>
        <fullName evidence="4">Centromere protein V pseudogene 2</fullName>
    </alternativeName>
</protein>
<proteinExistence type="inferred from homology"/>
<evidence type="ECO:0000255" key="1">
    <source>
        <dbReference type="PROSITE-ProRule" id="PRU01239"/>
    </source>
</evidence>
<evidence type="ECO:0000256" key="2">
    <source>
        <dbReference type="SAM" id="MobiDB-lite"/>
    </source>
</evidence>
<evidence type="ECO:0000305" key="3"/>
<evidence type="ECO:0000312" key="4">
    <source>
        <dbReference type="HGNC" id="HGNC:43879"/>
    </source>
</evidence>
<gene>
    <name evidence="4" type="primary">CENPVL2</name>
    <name evidence="4" type="synonym">CENPVP2</name>
</gene>
<dbReference type="EMBL" id="AC234030">
    <property type="status" value="NOT_ANNOTATED_CDS"/>
    <property type="molecule type" value="Genomic_DNA"/>
</dbReference>
<dbReference type="CCDS" id="CCDS87744.1"/>
<dbReference type="RefSeq" id="NP_001342207.1">
    <property type="nucleotide sequence ID" value="NM_001355278.1"/>
</dbReference>
<dbReference type="SMR" id="P0DPI3"/>
<dbReference type="GlyGen" id="P0DPI3">
    <property type="glycosylation" value="1 site"/>
</dbReference>
<dbReference type="jPOST" id="P0DPI3"/>
<dbReference type="MassIVE" id="P0DPI3"/>
<dbReference type="PeptideAtlas" id="P0DPI3"/>
<dbReference type="Pumba" id="P0DPI3"/>
<dbReference type="Ensembl" id="ENST00000634648.1">
    <property type="protein sequence ID" value="ENSP00000489328.1"/>
    <property type="gene ID" value="ENSG00000283093.1"/>
</dbReference>
<dbReference type="GeneID" id="441495"/>
<dbReference type="MANE-Select" id="ENST00000634648.1">
    <property type="protein sequence ID" value="ENSP00000489328.1"/>
    <property type="RefSeq nucleotide sequence ID" value="NM_001355278.1"/>
    <property type="RefSeq protein sequence ID" value="NP_001342207.1"/>
</dbReference>
<dbReference type="AGR" id="HGNC:43879"/>
<dbReference type="GeneCards" id="CENPVL2"/>
<dbReference type="HGNC" id="HGNC:43879">
    <property type="gene designation" value="CENPVL2"/>
</dbReference>
<dbReference type="HPA" id="ENSG00000283093">
    <property type="expression patterns" value="Tissue enriched (brain)"/>
</dbReference>
<dbReference type="neXtProt" id="NX_P0DPI3"/>
<dbReference type="OpenTargets" id="ENSG00000223591"/>
<dbReference type="VEuPathDB" id="HostDB:ENSG00000283093"/>
<dbReference type="GeneTree" id="ENSGT00390000003183"/>
<dbReference type="InParanoid" id="P0DPI3"/>
<dbReference type="OMA" id="ACPREQQ"/>
<dbReference type="OrthoDB" id="10015082at2759"/>
<dbReference type="PAN-GO" id="P0DPI3">
    <property type="GO annotations" value="0 GO annotations based on evolutionary models"/>
</dbReference>
<dbReference type="Pharos" id="P0DPI3">
    <property type="development level" value="Tdark"/>
</dbReference>
<dbReference type="PRO" id="PR:P0DPI3"/>
<dbReference type="Proteomes" id="UP000005640">
    <property type="component" value="Chromosome X"/>
</dbReference>
<dbReference type="Bgee" id="ENSG00000283093">
    <property type="expression patterns" value="Expressed in cortical plate and 21 other cell types or tissues"/>
</dbReference>
<dbReference type="GO" id="GO:0016846">
    <property type="term" value="F:carbon-sulfur lyase activity"/>
    <property type="evidence" value="ECO:0007669"/>
    <property type="project" value="InterPro"/>
</dbReference>
<dbReference type="GO" id="GO:0046872">
    <property type="term" value="F:metal ion binding"/>
    <property type="evidence" value="ECO:0007669"/>
    <property type="project" value="UniProtKB-KW"/>
</dbReference>
<dbReference type="Gene3D" id="2.170.150.70">
    <property type="match status" value="1"/>
</dbReference>
<dbReference type="InterPro" id="IPR052355">
    <property type="entry name" value="CENP-V-like"/>
</dbReference>
<dbReference type="InterPro" id="IPR006913">
    <property type="entry name" value="CENP-V/GFA"/>
</dbReference>
<dbReference type="InterPro" id="IPR011057">
    <property type="entry name" value="Mss4-like_sf"/>
</dbReference>
<dbReference type="PANTHER" id="PTHR28620">
    <property type="entry name" value="CENTROMERE PROTEIN V"/>
    <property type="match status" value="1"/>
</dbReference>
<dbReference type="PANTHER" id="PTHR28620:SF7">
    <property type="entry name" value="CENTROMERE PROTEIN V-LIKE PROTEIN 3"/>
    <property type="match status" value="1"/>
</dbReference>
<dbReference type="Pfam" id="PF04828">
    <property type="entry name" value="GFA"/>
    <property type="match status" value="1"/>
</dbReference>
<dbReference type="SUPFAM" id="SSF51316">
    <property type="entry name" value="Mss4-like"/>
    <property type="match status" value="1"/>
</dbReference>
<dbReference type="PROSITE" id="PS51891">
    <property type="entry name" value="CENP_V_GFA"/>
    <property type="match status" value="1"/>
</dbReference>
<reference key="1">
    <citation type="journal article" date="2000" name="Nature">
        <title>The DNA sequence of human chromosome 21.</title>
        <authorList>
            <person name="Hattori M."/>
            <person name="Fujiyama A."/>
            <person name="Taylor T.D."/>
            <person name="Watanabe H."/>
            <person name="Yada T."/>
            <person name="Park H.-S."/>
            <person name="Toyoda A."/>
            <person name="Ishii K."/>
            <person name="Totoki Y."/>
            <person name="Choi D.-K."/>
            <person name="Groner Y."/>
            <person name="Soeda E."/>
            <person name="Ohki M."/>
            <person name="Takagi T."/>
            <person name="Sakaki Y."/>
            <person name="Taudien S."/>
            <person name="Blechschmidt K."/>
            <person name="Polley A."/>
            <person name="Menzel U."/>
            <person name="Delabar J."/>
            <person name="Kumpf K."/>
            <person name="Lehmann R."/>
            <person name="Patterson D."/>
            <person name="Reichwald K."/>
            <person name="Rump A."/>
            <person name="Schillhabel M."/>
            <person name="Schudy A."/>
            <person name="Zimmermann W."/>
            <person name="Rosenthal A."/>
            <person name="Kudoh J."/>
            <person name="Shibuya K."/>
            <person name="Kawasaki K."/>
            <person name="Asakawa S."/>
            <person name="Shintani A."/>
            <person name="Sasaki T."/>
            <person name="Nagamine K."/>
            <person name="Mitsuyama S."/>
            <person name="Antonarakis S.E."/>
            <person name="Minoshima S."/>
            <person name="Shimizu N."/>
            <person name="Nordsiek G."/>
            <person name="Hornischer K."/>
            <person name="Brandt P."/>
            <person name="Scharfe M."/>
            <person name="Schoen O."/>
            <person name="Desario A."/>
            <person name="Reichelt J."/>
            <person name="Kauer G."/>
            <person name="Bloecker H."/>
            <person name="Ramser J."/>
            <person name="Beck A."/>
            <person name="Klages S."/>
            <person name="Hennig S."/>
            <person name="Riesselmann L."/>
            <person name="Dagand E."/>
            <person name="Wehrmeyer S."/>
            <person name="Borzym K."/>
            <person name="Gardiner K."/>
            <person name="Nizetic D."/>
            <person name="Francis F."/>
            <person name="Lehrach H."/>
            <person name="Reinhardt R."/>
            <person name="Yaspo M.-L."/>
        </authorList>
    </citation>
    <scope>NUCLEOTIDE SEQUENCE [LARGE SCALE GENOMIC DNA]</scope>
</reference>
<accession>P0DPI3</accession>
<feature type="chain" id="PRO_0000444698" description="Centromere protein V-like protein 2">
    <location>
        <begin position="1"/>
        <end position="272"/>
    </location>
</feature>
<feature type="domain" description="CENP-V/GFA" evidence="1">
    <location>
        <begin position="133"/>
        <end position="246"/>
    </location>
</feature>
<feature type="region of interest" description="Disordered" evidence="2">
    <location>
        <begin position="1"/>
        <end position="23"/>
    </location>
</feature>
<feature type="region of interest" description="Disordered" evidence="2">
    <location>
        <begin position="65"/>
        <end position="95"/>
    </location>
</feature>
<feature type="region of interest" description="Disordered" evidence="2">
    <location>
        <begin position="240"/>
        <end position="272"/>
    </location>
</feature>
<feature type="compositionally biased region" description="Basic residues" evidence="2">
    <location>
        <begin position="1"/>
        <end position="17"/>
    </location>
</feature>
<feature type="compositionally biased region" description="Pro residues" evidence="2">
    <location>
        <begin position="79"/>
        <end position="90"/>
    </location>
</feature>
<feature type="binding site" evidence="1">
    <location>
        <position position="137"/>
    </location>
    <ligand>
        <name>Zn(2+)</name>
        <dbReference type="ChEBI" id="CHEBI:29105"/>
        <label>1</label>
        <note>structural</note>
    </ligand>
</feature>
<feature type="binding site" evidence="1">
    <location>
        <position position="139"/>
    </location>
    <ligand>
        <name>Zn(2+)</name>
        <dbReference type="ChEBI" id="CHEBI:29105"/>
        <label>1</label>
        <note>structural</note>
    </ligand>
</feature>
<feature type="binding site" evidence="1">
    <location>
        <position position="157"/>
    </location>
    <ligand>
        <name>Zn(2+)</name>
        <dbReference type="ChEBI" id="CHEBI:29105"/>
        <label>2</label>
        <note>catalytic</note>
    </ligand>
</feature>
<feature type="binding site" evidence="1">
    <location>
        <position position="159"/>
    </location>
    <ligand>
        <name>Zn(2+)</name>
        <dbReference type="ChEBI" id="CHEBI:29105"/>
        <label>2</label>
        <note>catalytic</note>
    </ligand>
</feature>
<feature type="binding site" evidence="1">
    <location>
        <position position="162"/>
    </location>
    <ligand>
        <name>Zn(2+)</name>
        <dbReference type="ChEBI" id="CHEBI:29105"/>
        <label>2</label>
        <note>catalytic</note>
    </ligand>
</feature>
<feature type="binding site" evidence="1">
    <location>
        <position position="201"/>
    </location>
    <ligand>
        <name>Zn(2+)</name>
        <dbReference type="ChEBI" id="CHEBI:29105"/>
        <label>1</label>
        <note>structural</note>
    </ligand>
</feature>
<feature type="binding site" evidence="1">
    <location>
        <position position="204"/>
    </location>
    <ligand>
        <name>Zn(2+)</name>
        <dbReference type="ChEBI" id="CHEBI:29105"/>
        <label>1</label>
        <note>structural</note>
    </ligand>
</feature>
<comment type="cofactor">
    <cofactor evidence="1">
        <name>Zn(2+)</name>
        <dbReference type="ChEBI" id="CHEBI:29105"/>
    </cofactor>
    <text evidence="1">Binds 2 Zn(2+) ions per subunit.</text>
</comment>
<comment type="similarity">
    <text evidence="3">Belongs to the Gfa family.</text>
</comment>
<sequence>MGRVRNRATAQRRRRKRPGDPPAACAAIAVTGASRAQCPRVQVGVGSHAAAKRWLGRWRRKRRWRRVRKAGPRDLLPSAPTPDPPGPAPSPKDLDLGAQRERWETFRKLRGLSCEGAAKVLLDTFEYPGLVHHTGGCHCGAVRFAVWAPADLRVVDCSCRLCRKKQHRHFLVPASRFTLLQGAESIVTYRSNTHPALHSFCSRCGVQSFHAAVSDPRVYGVAPHCLDEGTVRSVVIEEVGGGDPGEEAAEEHKAIHKTSSQSAPACPREQEQ</sequence>
<organism>
    <name type="scientific">Homo sapiens</name>
    <name type="common">Human</name>
    <dbReference type="NCBI Taxonomy" id="9606"/>
    <lineage>
        <taxon>Eukaryota</taxon>
        <taxon>Metazoa</taxon>
        <taxon>Chordata</taxon>
        <taxon>Craniata</taxon>
        <taxon>Vertebrata</taxon>
        <taxon>Euteleostomi</taxon>
        <taxon>Mammalia</taxon>
        <taxon>Eutheria</taxon>
        <taxon>Euarchontoglires</taxon>
        <taxon>Primates</taxon>
        <taxon>Haplorrhini</taxon>
        <taxon>Catarrhini</taxon>
        <taxon>Hominidae</taxon>
        <taxon>Homo</taxon>
    </lineage>
</organism>
<name>CENL2_HUMAN</name>
<keyword id="KW-0479">Metal-binding</keyword>
<keyword id="KW-1185">Reference proteome</keyword>
<keyword id="KW-0862">Zinc</keyword>